<dbReference type="EMBL" id="AF177169">
    <property type="protein sequence ID" value="AAF31668.1"/>
    <property type="molecule type" value="mRNA"/>
</dbReference>
<dbReference type="EMBL" id="AK293823">
    <property type="protein sequence ID" value="BAG57227.1"/>
    <property type="molecule type" value="mRNA"/>
</dbReference>
<dbReference type="EMBL" id="AC026770">
    <property type="status" value="NOT_ANNOTATED_CDS"/>
    <property type="molecule type" value="Genomic_DNA"/>
</dbReference>
<dbReference type="EMBL" id="AC090971">
    <property type="status" value="NOT_ANNOTATED_CDS"/>
    <property type="molecule type" value="Genomic_DNA"/>
</dbReference>
<dbReference type="EMBL" id="BC064961">
    <property type="protein sequence ID" value="AAH64961.1"/>
    <property type="molecule type" value="mRNA"/>
</dbReference>
<dbReference type="CCDS" id="CCDS10144.1">
    <molecule id="Q9NZR1-1"/>
</dbReference>
<dbReference type="CCDS" id="CCDS45260.1">
    <molecule id="Q9NZR1-2"/>
</dbReference>
<dbReference type="RefSeq" id="NP_001136357.1">
    <molecule id="Q9NZR1-2"/>
    <property type="nucleotide sequence ID" value="NM_001142885.2"/>
</dbReference>
<dbReference type="RefSeq" id="NP_055363.1">
    <molecule id="Q9NZR1-1"/>
    <property type="nucleotide sequence ID" value="NM_014548.4"/>
</dbReference>
<dbReference type="SMR" id="Q9NZR1"/>
<dbReference type="BioGRID" id="118900">
    <property type="interactions" value="82"/>
</dbReference>
<dbReference type="FunCoup" id="Q9NZR1">
    <property type="interactions" value="423"/>
</dbReference>
<dbReference type="IntAct" id="Q9NZR1">
    <property type="interactions" value="45"/>
</dbReference>
<dbReference type="STRING" id="9606.ENSP00000249700"/>
<dbReference type="GlyCosmos" id="Q9NZR1">
    <property type="glycosylation" value="2 sites, 1 glycan"/>
</dbReference>
<dbReference type="GlyGen" id="Q9NZR1">
    <property type="glycosylation" value="2 sites, 1 O-linked glycan (2 sites)"/>
</dbReference>
<dbReference type="iPTMnet" id="Q9NZR1"/>
<dbReference type="PhosphoSitePlus" id="Q9NZR1"/>
<dbReference type="BioMuta" id="TMOD2"/>
<dbReference type="DMDM" id="23396886"/>
<dbReference type="jPOST" id="Q9NZR1"/>
<dbReference type="MassIVE" id="Q9NZR1"/>
<dbReference type="PaxDb" id="9606-ENSP00000249700"/>
<dbReference type="PeptideAtlas" id="Q9NZR1"/>
<dbReference type="ProteomicsDB" id="83490">
    <molecule id="Q9NZR1-1"/>
</dbReference>
<dbReference type="ProteomicsDB" id="83491">
    <molecule id="Q9NZR1-2"/>
</dbReference>
<dbReference type="Pumba" id="Q9NZR1"/>
<dbReference type="Antibodypedia" id="24900">
    <property type="antibodies" value="189 antibodies from 27 providers"/>
</dbReference>
<dbReference type="DNASU" id="29767"/>
<dbReference type="Ensembl" id="ENST00000249700.9">
    <molecule id="Q9NZR1-1"/>
    <property type="protein sequence ID" value="ENSP00000249700.4"/>
    <property type="gene ID" value="ENSG00000128872.10"/>
</dbReference>
<dbReference type="Ensembl" id="ENST00000435126.6">
    <molecule id="Q9NZR1-2"/>
    <property type="protein sequence ID" value="ENSP00000404590.2"/>
    <property type="gene ID" value="ENSG00000128872.10"/>
</dbReference>
<dbReference type="GeneID" id="29767"/>
<dbReference type="KEGG" id="hsa:29767"/>
<dbReference type="MANE-Select" id="ENST00000249700.9">
    <property type="protein sequence ID" value="ENSP00000249700.4"/>
    <property type="RefSeq nucleotide sequence ID" value="NM_014548.4"/>
    <property type="RefSeq protein sequence ID" value="NP_055363.1"/>
</dbReference>
<dbReference type="UCSC" id="uc002abk.4">
    <molecule id="Q9NZR1-1"/>
    <property type="organism name" value="human"/>
</dbReference>
<dbReference type="AGR" id="HGNC:11872"/>
<dbReference type="CTD" id="29767"/>
<dbReference type="DisGeNET" id="29767"/>
<dbReference type="GeneCards" id="TMOD2"/>
<dbReference type="HGNC" id="HGNC:11872">
    <property type="gene designation" value="TMOD2"/>
</dbReference>
<dbReference type="HPA" id="ENSG00000128872">
    <property type="expression patterns" value="Tissue enriched (brain)"/>
</dbReference>
<dbReference type="MIM" id="602928">
    <property type="type" value="gene"/>
</dbReference>
<dbReference type="neXtProt" id="NX_Q9NZR1"/>
<dbReference type="OpenTargets" id="ENSG00000128872"/>
<dbReference type="PharmGKB" id="PA36573"/>
<dbReference type="VEuPathDB" id="HostDB:ENSG00000128872"/>
<dbReference type="eggNOG" id="KOG3735">
    <property type="taxonomic scope" value="Eukaryota"/>
</dbReference>
<dbReference type="GeneTree" id="ENSGT00940000160631"/>
<dbReference type="HOGENOM" id="CLU_031052_0_1_1"/>
<dbReference type="InParanoid" id="Q9NZR1"/>
<dbReference type="OMA" id="LEHQDRP"/>
<dbReference type="OrthoDB" id="2163268at2759"/>
<dbReference type="PAN-GO" id="Q9NZR1">
    <property type="GO annotations" value="7 GO annotations based on evolutionary models"/>
</dbReference>
<dbReference type="PhylomeDB" id="Q9NZR1"/>
<dbReference type="TreeFam" id="TF315841"/>
<dbReference type="PathwayCommons" id="Q9NZR1"/>
<dbReference type="Reactome" id="R-HSA-390522">
    <property type="pathway name" value="Striated Muscle Contraction"/>
</dbReference>
<dbReference type="SignaLink" id="Q9NZR1"/>
<dbReference type="BioGRID-ORCS" id="29767">
    <property type="hits" value="16 hits in 1166 CRISPR screens"/>
</dbReference>
<dbReference type="CD-CODE" id="FB4E32DD">
    <property type="entry name" value="Presynaptic clusters and postsynaptic densities"/>
</dbReference>
<dbReference type="ChiTaRS" id="TMOD2">
    <property type="organism name" value="human"/>
</dbReference>
<dbReference type="GeneWiki" id="TMOD2"/>
<dbReference type="GenomeRNAi" id="29767"/>
<dbReference type="Pharos" id="Q9NZR1">
    <property type="development level" value="Tbio"/>
</dbReference>
<dbReference type="PRO" id="PR:Q9NZR1"/>
<dbReference type="Proteomes" id="UP000005640">
    <property type="component" value="Chromosome 15"/>
</dbReference>
<dbReference type="RNAct" id="Q9NZR1">
    <property type="molecule type" value="protein"/>
</dbReference>
<dbReference type="Bgee" id="ENSG00000128872">
    <property type="expression patterns" value="Expressed in Brodmann (1909) area 23 and 166 other cell types or tissues"/>
</dbReference>
<dbReference type="ExpressionAtlas" id="Q9NZR1">
    <property type="expression patterns" value="baseline and differential"/>
</dbReference>
<dbReference type="GO" id="GO:0005856">
    <property type="term" value="C:cytoskeleton"/>
    <property type="evidence" value="ECO:0000318"/>
    <property type="project" value="GO_Central"/>
</dbReference>
<dbReference type="GO" id="GO:0030016">
    <property type="term" value="C:myofibril"/>
    <property type="evidence" value="ECO:0000318"/>
    <property type="project" value="GO_Central"/>
</dbReference>
<dbReference type="GO" id="GO:0005865">
    <property type="term" value="C:striated muscle thin filament"/>
    <property type="evidence" value="ECO:0000318"/>
    <property type="project" value="GO_Central"/>
</dbReference>
<dbReference type="GO" id="GO:0045202">
    <property type="term" value="C:synapse"/>
    <property type="evidence" value="ECO:0007669"/>
    <property type="project" value="GOC"/>
</dbReference>
<dbReference type="GO" id="GO:0003779">
    <property type="term" value="F:actin binding"/>
    <property type="evidence" value="ECO:0007669"/>
    <property type="project" value="UniProtKB-KW"/>
</dbReference>
<dbReference type="GO" id="GO:0005523">
    <property type="term" value="F:tropomyosin binding"/>
    <property type="evidence" value="ECO:0000318"/>
    <property type="project" value="GO_Central"/>
</dbReference>
<dbReference type="GO" id="GO:0007015">
    <property type="term" value="P:actin filament organization"/>
    <property type="evidence" value="ECO:0000318"/>
    <property type="project" value="GO_Central"/>
</dbReference>
<dbReference type="GO" id="GO:0007611">
    <property type="term" value="P:learning or memory"/>
    <property type="evidence" value="ECO:0007669"/>
    <property type="project" value="Ensembl"/>
</dbReference>
<dbReference type="GO" id="GO:0006936">
    <property type="term" value="P:muscle contraction"/>
    <property type="evidence" value="ECO:0000318"/>
    <property type="project" value="GO_Central"/>
</dbReference>
<dbReference type="GO" id="GO:0030239">
    <property type="term" value="P:myofibril assembly"/>
    <property type="evidence" value="ECO:0000318"/>
    <property type="project" value="GO_Central"/>
</dbReference>
<dbReference type="GO" id="GO:0007399">
    <property type="term" value="P:nervous system development"/>
    <property type="evidence" value="ECO:0000304"/>
    <property type="project" value="ProtInc"/>
</dbReference>
<dbReference type="GO" id="GO:0007270">
    <property type="term" value="P:neuron-neuron synaptic transmission"/>
    <property type="evidence" value="ECO:0007669"/>
    <property type="project" value="Ensembl"/>
</dbReference>
<dbReference type="GO" id="GO:0051694">
    <property type="term" value="P:pointed-end actin filament capping"/>
    <property type="evidence" value="ECO:0007669"/>
    <property type="project" value="InterPro"/>
</dbReference>
<dbReference type="GO" id="GO:0045745">
    <property type="term" value="P:positive regulation of G protein-coupled receptor signaling pathway"/>
    <property type="evidence" value="ECO:0007669"/>
    <property type="project" value="Ensembl"/>
</dbReference>
<dbReference type="FunFam" id="3.80.10.10:FF:000006">
    <property type="entry name" value="Tropomodulin 2"/>
    <property type="match status" value="1"/>
</dbReference>
<dbReference type="Gene3D" id="3.80.10.10">
    <property type="entry name" value="Ribonuclease Inhibitor"/>
    <property type="match status" value="1"/>
</dbReference>
<dbReference type="InterPro" id="IPR032675">
    <property type="entry name" value="LRR_dom_sf"/>
</dbReference>
<dbReference type="InterPro" id="IPR004934">
    <property type="entry name" value="TMOD"/>
</dbReference>
<dbReference type="PANTHER" id="PTHR10901">
    <property type="entry name" value="TROPOMODULIN"/>
    <property type="match status" value="1"/>
</dbReference>
<dbReference type="PANTHER" id="PTHR10901:SF15">
    <property type="entry name" value="TROPOMODULIN-2"/>
    <property type="match status" value="1"/>
</dbReference>
<dbReference type="Pfam" id="PF03250">
    <property type="entry name" value="Tropomodulin"/>
    <property type="match status" value="1"/>
</dbReference>
<dbReference type="SUPFAM" id="SSF52047">
    <property type="entry name" value="RNI-like"/>
    <property type="match status" value="1"/>
</dbReference>
<gene>
    <name type="primary">TMOD2</name>
    <name type="synonym">NTMOD</name>
</gene>
<name>TMOD2_HUMAN</name>
<feature type="chain" id="PRO_0000186131" description="Tropomodulin-2">
    <location>
        <begin position="1"/>
        <end position="351"/>
    </location>
</feature>
<feature type="modified residue" description="Phosphoserine" evidence="2">
    <location>
        <position position="25"/>
    </location>
</feature>
<feature type="splice variant" id="VSP_041506" description="In isoform 2." evidence="4">
    <location>
        <begin position="209"/>
        <end position="244"/>
    </location>
</feature>
<feature type="sequence variant" id="VAR_052399" description="In dbSNP:rs34791185.">
    <original>P</original>
    <variation>A</variation>
    <location>
        <position position="63"/>
    </location>
</feature>
<feature type="sequence conflict" description="In Ref. 2; BAG57227." evidence="5" ref="2">
    <original>L</original>
    <variation>M</variation>
    <location>
        <position position="284"/>
    </location>
</feature>
<keyword id="KW-0009">Actin-binding</keyword>
<keyword id="KW-0025">Alternative splicing</keyword>
<keyword id="KW-0963">Cytoplasm</keyword>
<keyword id="KW-0206">Cytoskeleton</keyword>
<keyword id="KW-0903">Direct protein sequencing</keyword>
<keyword id="KW-0597">Phosphoprotein</keyword>
<keyword id="KW-1267">Proteomics identification</keyword>
<keyword id="KW-1185">Reference proteome</keyword>
<comment type="function">
    <text evidence="1">Blocks the elongation and depolymerization of the actin filaments at the pointed end. The Tmod/TM complex contributes to the formation of the short actin protofilament, which in turn defines the geometry of the membrane skeleton (By similarity).</text>
</comment>
<comment type="subunit">
    <text>Binds to the N-terminus of tropomyosin and to actin.</text>
</comment>
<comment type="interaction">
    <interactant intactId="EBI-4289968">
        <id>Q9NZR1</id>
    </interactant>
    <interactant intactId="EBI-50433196">
        <id>A0A6Q8PF08</id>
        <label>PMP22</label>
    </interactant>
    <organismsDiffer>false</organismsDiffer>
    <experiments>3</experiments>
</comment>
<comment type="subcellular location">
    <subcellularLocation>
        <location evidence="1">Cytoplasm</location>
        <location evidence="1">Cytoskeleton</location>
    </subcellularLocation>
</comment>
<comment type="alternative products">
    <event type="alternative splicing"/>
    <isoform>
        <id>Q9NZR1-1</id>
        <name>1</name>
        <sequence type="displayed"/>
    </isoform>
    <isoform>
        <id>Q9NZR1-2</id>
        <name>2</name>
        <sequence type="described" ref="VSP_041506"/>
    </isoform>
</comment>
<comment type="tissue specificity">
    <text evidence="3">Neuronal-tissue specific.</text>
</comment>
<comment type="similarity">
    <text evidence="5">Belongs to the tropomodulin family.</text>
</comment>
<sequence>MALPFQKELEKYKNIDEDELLGKLSEEELKQLENVLDDLDPESAMLPAGFRQKDQTQKAATGPFDREHLLMYLEKEALEQKDREDFVPFTGEKKGRVFIPKEKPIETRKEEKVTLDPELEEALASASDTELYDLAAVLGVHNLLNNPKFDEETANNKGGKGPVRNVVKGEKVKPVFEEPPNPTNVEISLQQMKANDPSLQEVNLNNIKNIPIPTLREFAKALETNTHVKKFSLAATRSNDPVAIAFADMLKVNKTLTSLNIESNFITGTGILALVEALKENDTLTEIKIDNQRQQLGTAVEMEIAQMLEENSRILKFGYQFTKQGPRTRVAAAITKNNDLVRKKRVEADRR</sequence>
<reference key="1">
    <citation type="journal article" date="2000" name="Genomics">
        <title>Sequencing, expression analysis, and mapping of three unique human tropomodulin genes and their mouse orthologs.</title>
        <authorList>
            <person name="Cox P.R."/>
            <person name="Zoghbi H.Y."/>
        </authorList>
    </citation>
    <scope>NUCLEOTIDE SEQUENCE [MRNA] (ISOFORM 1)</scope>
    <scope>TISSUE SPECIFICITY</scope>
</reference>
<reference key="2">
    <citation type="journal article" date="2004" name="Nat. Genet.">
        <title>Complete sequencing and characterization of 21,243 full-length human cDNAs.</title>
        <authorList>
            <person name="Ota T."/>
            <person name="Suzuki Y."/>
            <person name="Nishikawa T."/>
            <person name="Otsuki T."/>
            <person name="Sugiyama T."/>
            <person name="Irie R."/>
            <person name="Wakamatsu A."/>
            <person name="Hayashi K."/>
            <person name="Sato H."/>
            <person name="Nagai K."/>
            <person name="Kimura K."/>
            <person name="Makita H."/>
            <person name="Sekine M."/>
            <person name="Obayashi M."/>
            <person name="Nishi T."/>
            <person name="Shibahara T."/>
            <person name="Tanaka T."/>
            <person name="Ishii S."/>
            <person name="Yamamoto J."/>
            <person name="Saito K."/>
            <person name="Kawai Y."/>
            <person name="Isono Y."/>
            <person name="Nakamura Y."/>
            <person name="Nagahari K."/>
            <person name="Murakami K."/>
            <person name="Yasuda T."/>
            <person name="Iwayanagi T."/>
            <person name="Wagatsuma M."/>
            <person name="Shiratori A."/>
            <person name="Sudo H."/>
            <person name="Hosoiri T."/>
            <person name="Kaku Y."/>
            <person name="Kodaira H."/>
            <person name="Kondo H."/>
            <person name="Sugawara M."/>
            <person name="Takahashi M."/>
            <person name="Kanda K."/>
            <person name="Yokoi T."/>
            <person name="Furuya T."/>
            <person name="Kikkawa E."/>
            <person name="Omura Y."/>
            <person name="Abe K."/>
            <person name="Kamihara K."/>
            <person name="Katsuta N."/>
            <person name="Sato K."/>
            <person name="Tanikawa M."/>
            <person name="Yamazaki M."/>
            <person name="Ninomiya K."/>
            <person name="Ishibashi T."/>
            <person name="Yamashita H."/>
            <person name="Murakawa K."/>
            <person name="Fujimori K."/>
            <person name="Tanai H."/>
            <person name="Kimata M."/>
            <person name="Watanabe M."/>
            <person name="Hiraoka S."/>
            <person name="Chiba Y."/>
            <person name="Ishida S."/>
            <person name="Ono Y."/>
            <person name="Takiguchi S."/>
            <person name="Watanabe S."/>
            <person name="Yosida M."/>
            <person name="Hotuta T."/>
            <person name="Kusano J."/>
            <person name="Kanehori K."/>
            <person name="Takahashi-Fujii A."/>
            <person name="Hara H."/>
            <person name="Tanase T.-O."/>
            <person name="Nomura Y."/>
            <person name="Togiya S."/>
            <person name="Komai F."/>
            <person name="Hara R."/>
            <person name="Takeuchi K."/>
            <person name="Arita M."/>
            <person name="Imose N."/>
            <person name="Musashino K."/>
            <person name="Yuuki H."/>
            <person name="Oshima A."/>
            <person name="Sasaki N."/>
            <person name="Aotsuka S."/>
            <person name="Yoshikawa Y."/>
            <person name="Matsunawa H."/>
            <person name="Ichihara T."/>
            <person name="Shiohata N."/>
            <person name="Sano S."/>
            <person name="Moriya S."/>
            <person name="Momiyama H."/>
            <person name="Satoh N."/>
            <person name="Takami S."/>
            <person name="Terashima Y."/>
            <person name="Suzuki O."/>
            <person name="Nakagawa S."/>
            <person name="Senoh A."/>
            <person name="Mizoguchi H."/>
            <person name="Goto Y."/>
            <person name="Shimizu F."/>
            <person name="Wakebe H."/>
            <person name="Hishigaki H."/>
            <person name="Watanabe T."/>
            <person name="Sugiyama A."/>
            <person name="Takemoto M."/>
            <person name="Kawakami B."/>
            <person name="Yamazaki M."/>
            <person name="Watanabe K."/>
            <person name="Kumagai A."/>
            <person name="Itakura S."/>
            <person name="Fukuzumi Y."/>
            <person name="Fujimori Y."/>
            <person name="Komiyama M."/>
            <person name="Tashiro H."/>
            <person name="Tanigami A."/>
            <person name="Fujiwara T."/>
            <person name="Ono T."/>
            <person name="Yamada K."/>
            <person name="Fujii Y."/>
            <person name="Ozaki K."/>
            <person name="Hirao M."/>
            <person name="Ohmori Y."/>
            <person name="Kawabata A."/>
            <person name="Hikiji T."/>
            <person name="Kobatake N."/>
            <person name="Inagaki H."/>
            <person name="Ikema Y."/>
            <person name="Okamoto S."/>
            <person name="Okitani R."/>
            <person name="Kawakami T."/>
            <person name="Noguchi S."/>
            <person name="Itoh T."/>
            <person name="Shigeta K."/>
            <person name="Senba T."/>
            <person name="Matsumura K."/>
            <person name="Nakajima Y."/>
            <person name="Mizuno T."/>
            <person name="Morinaga M."/>
            <person name="Sasaki M."/>
            <person name="Togashi T."/>
            <person name="Oyama M."/>
            <person name="Hata H."/>
            <person name="Watanabe M."/>
            <person name="Komatsu T."/>
            <person name="Mizushima-Sugano J."/>
            <person name="Satoh T."/>
            <person name="Shirai Y."/>
            <person name="Takahashi Y."/>
            <person name="Nakagawa K."/>
            <person name="Okumura K."/>
            <person name="Nagase T."/>
            <person name="Nomura N."/>
            <person name="Kikuchi H."/>
            <person name="Masuho Y."/>
            <person name="Yamashita R."/>
            <person name="Nakai K."/>
            <person name="Yada T."/>
            <person name="Nakamura Y."/>
            <person name="Ohara O."/>
            <person name="Isogai T."/>
            <person name="Sugano S."/>
        </authorList>
    </citation>
    <scope>NUCLEOTIDE SEQUENCE [LARGE SCALE MRNA] (ISOFORM 2)</scope>
    <source>
        <tissue>Cerebellum</tissue>
    </source>
</reference>
<reference key="3">
    <citation type="journal article" date="2006" name="Nature">
        <title>Analysis of the DNA sequence and duplication history of human chromosome 15.</title>
        <authorList>
            <person name="Zody M.C."/>
            <person name="Garber M."/>
            <person name="Sharpe T."/>
            <person name="Young S.K."/>
            <person name="Rowen L."/>
            <person name="O'Neill K."/>
            <person name="Whittaker C.A."/>
            <person name="Kamal M."/>
            <person name="Chang J.L."/>
            <person name="Cuomo C.A."/>
            <person name="Dewar K."/>
            <person name="FitzGerald M.G."/>
            <person name="Kodira C.D."/>
            <person name="Madan A."/>
            <person name="Qin S."/>
            <person name="Yang X."/>
            <person name="Abbasi N."/>
            <person name="Abouelleil A."/>
            <person name="Arachchi H.M."/>
            <person name="Baradarani L."/>
            <person name="Birditt B."/>
            <person name="Bloom S."/>
            <person name="Bloom T."/>
            <person name="Borowsky M.L."/>
            <person name="Burke J."/>
            <person name="Butler J."/>
            <person name="Cook A."/>
            <person name="DeArellano K."/>
            <person name="DeCaprio D."/>
            <person name="Dorris L. III"/>
            <person name="Dors M."/>
            <person name="Eichler E.E."/>
            <person name="Engels R."/>
            <person name="Fahey J."/>
            <person name="Fleetwood P."/>
            <person name="Friedman C."/>
            <person name="Gearin G."/>
            <person name="Hall J.L."/>
            <person name="Hensley G."/>
            <person name="Johnson E."/>
            <person name="Jones C."/>
            <person name="Kamat A."/>
            <person name="Kaur A."/>
            <person name="Locke D.P."/>
            <person name="Madan A."/>
            <person name="Munson G."/>
            <person name="Jaffe D.B."/>
            <person name="Lui A."/>
            <person name="Macdonald P."/>
            <person name="Mauceli E."/>
            <person name="Naylor J.W."/>
            <person name="Nesbitt R."/>
            <person name="Nicol R."/>
            <person name="O'Leary S.B."/>
            <person name="Ratcliffe A."/>
            <person name="Rounsley S."/>
            <person name="She X."/>
            <person name="Sneddon K.M.B."/>
            <person name="Stewart S."/>
            <person name="Sougnez C."/>
            <person name="Stone S.M."/>
            <person name="Topham K."/>
            <person name="Vincent D."/>
            <person name="Wang S."/>
            <person name="Zimmer A.R."/>
            <person name="Birren B.W."/>
            <person name="Hood L."/>
            <person name="Lander E.S."/>
            <person name="Nusbaum C."/>
        </authorList>
    </citation>
    <scope>NUCLEOTIDE SEQUENCE [LARGE SCALE GENOMIC DNA]</scope>
</reference>
<reference key="4">
    <citation type="journal article" date="2004" name="Genome Res.">
        <title>The status, quality, and expansion of the NIH full-length cDNA project: the Mammalian Gene Collection (MGC).</title>
        <authorList>
            <consortium name="The MGC Project Team"/>
        </authorList>
    </citation>
    <scope>NUCLEOTIDE SEQUENCE [LARGE SCALE MRNA] (ISOFORM 1)</scope>
    <source>
        <tissue>Retina</tissue>
    </source>
</reference>
<reference key="5">
    <citation type="submission" date="2008-12" db="UniProtKB">
        <authorList>
            <person name="Lubec G."/>
            <person name="Afjehi-Sadat L."/>
            <person name="Chen W.-Q."/>
            <person name="Sun Y."/>
        </authorList>
    </citation>
    <scope>PROTEIN SEQUENCE OF 14-23; 82-93; 194-208 AND 238-251</scope>
    <scope>IDENTIFICATION BY MASS SPECTROMETRY</scope>
    <source>
        <tissue>Brain</tissue>
        <tissue>Cajal-Retzius cell</tissue>
        <tissue>Fetal brain cortex</tissue>
    </source>
</reference>
<protein>
    <recommendedName>
        <fullName>Tropomodulin-2</fullName>
    </recommendedName>
    <alternativeName>
        <fullName>Neuronal tropomodulin</fullName>
        <shortName>N-Tmod</shortName>
    </alternativeName>
</protein>
<proteinExistence type="evidence at protein level"/>
<evidence type="ECO:0000250" key="1"/>
<evidence type="ECO:0000250" key="2">
    <source>
        <dbReference type="UniProtKB" id="P70566"/>
    </source>
</evidence>
<evidence type="ECO:0000269" key="3">
    <source>
    </source>
</evidence>
<evidence type="ECO:0000303" key="4">
    <source>
    </source>
</evidence>
<evidence type="ECO:0000305" key="5"/>
<accession>Q9NZR1</accession>
<accession>B4DEW6</accession>
<organism>
    <name type="scientific">Homo sapiens</name>
    <name type="common">Human</name>
    <dbReference type="NCBI Taxonomy" id="9606"/>
    <lineage>
        <taxon>Eukaryota</taxon>
        <taxon>Metazoa</taxon>
        <taxon>Chordata</taxon>
        <taxon>Craniata</taxon>
        <taxon>Vertebrata</taxon>
        <taxon>Euteleostomi</taxon>
        <taxon>Mammalia</taxon>
        <taxon>Eutheria</taxon>
        <taxon>Euarchontoglires</taxon>
        <taxon>Primates</taxon>
        <taxon>Haplorrhini</taxon>
        <taxon>Catarrhini</taxon>
        <taxon>Hominidae</taxon>
        <taxon>Homo</taxon>
    </lineage>
</organism>